<feature type="chain" id="PRO_1000002704" description="UDP-N-acetylglucosamine--N-acetylmuramyl-(pentapeptide) pyrophosphoryl-undecaprenol N-acetylglucosamine transferase">
    <location>
        <begin position="1"/>
        <end position="356"/>
    </location>
</feature>
<feature type="binding site" evidence="1">
    <location>
        <begin position="15"/>
        <end position="17"/>
    </location>
    <ligand>
        <name>UDP-N-acetyl-alpha-D-glucosamine</name>
        <dbReference type="ChEBI" id="CHEBI:57705"/>
    </ligand>
</feature>
<feature type="binding site" evidence="1">
    <location>
        <position position="127"/>
    </location>
    <ligand>
        <name>UDP-N-acetyl-alpha-D-glucosamine</name>
        <dbReference type="ChEBI" id="CHEBI:57705"/>
    </ligand>
</feature>
<feature type="binding site" evidence="1">
    <location>
        <position position="163"/>
    </location>
    <ligand>
        <name>UDP-N-acetyl-alpha-D-glucosamine</name>
        <dbReference type="ChEBI" id="CHEBI:57705"/>
    </ligand>
</feature>
<feature type="binding site" evidence="1">
    <location>
        <position position="191"/>
    </location>
    <ligand>
        <name>UDP-N-acetyl-alpha-D-glucosamine</name>
        <dbReference type="ChEBI" id="CHEBI:57705"/>
    </ligand>
</feature>
<feature type="binding site" evidence="1">
    <location>
        <position position="244"/>
    </location>
    <ligand>
        <name>UDP-N-acetyl-alpha-D-glucosamine</name>
        <dbReference type="ChEBI" id="CHEBI:57705"/>
    </ligand>
</feature>
<feature type="binding site" evidence="1">
    <location>
        <begin position="263"/>
        <end position="268"/>
    </location>
    <ligand>
        <name>UDP-N-acetyl-alpha-D-glucosamine</name>
        <dbReference type="ChEBI" id="CHEBI:57705"/>
    </ligand>
</feature>
<feature type="binding site" evidence="1">
    <location>
        <position position="288"/>
    </location>
    <ligand>
        <name>UDP-N-acetyl-alpha-D-glucosamine</name>
        <dbReference type="ChEBI" id="CHEBI:57705"/>
    </ligand>
</feature>
<sequence>MSGKTKRLMVMAGGTGGHVFPGLAVAHHLMAQGWQVRWLGTADRMEASLVPQHGIEIDFIKISGLRGKGLMAQLTAPIRIYRAVRQAQKIMRDYQPNVVLGMGGYVSGPGGLAAWLCGVPVVLHEQNGIAGLTNRWLARIAKKVLQAFPGAFPNADVVGNPVRTDVLALPLPAVRLSGREGPIRVLVIGGSQGARILNQTLPLVAASLGEQITLWHQVGKGALPEVSQAYQQAGQAGHLVVEFIDDMAAAYAWADVVVCRSGALTVSEVAAAGLPAIFVPFQHKDRQQYWNALPLEKAGAAKIIEQPQFTATSVSSLLASWDRATLLSMAERARSVAIPDATERVAAEVVAASKSA</sequence>
<dbReference type="EC" id="2.4.1.227" evidence="1"/>
<dbReference type="EMBL" id="CP000308">
    <property type="protein sequence ID" value="ABG15508.1"/>
    <property type="molecule type" value="Genomic_DNA"/>
</dbReference>
<dbReference type="RefSeq" id="WP_002210434.1">
    <property type="nucleotide sequence ID" value="NZ_CP009906.1"/>
</dbReference>
<dbReference type="SMR" id="Q1C214"/>
<dbReference type="CAZy" id="GT28">
    <property type="family name" value="Glycosyltransferase Family 28"/>
</dbReference>
<dbReference type="GeneID" id="57974060"/>
<dbReference type="KEGG" id="ypa:YPA_3546"/>
<dbReference type="UniPathway" id="UPA00219"/>
<dbReference type="Proteomes" id="UP000001971">
    <property type="component" value="Chromosome"/>
</dbReference>
<dbReference type="GO" id="GO:0005886">
    <property type="term" value="C:plasma membrane"/>
    <property type="evidence" value="ECO:0007669"/>
    <property type="project" value="UniProtKB-SubCell"/>
</dbReference>
<dbReference type="GO" id="GO:0051991">
    <property type="term" value="F:UDP-N-acetyl-D-glucosamine:N-acetylmuramoyl-L-alanyl-D-glutamyl-meso-2,6-diaminopimelyl-D-alanyl-D-alanine-diphosphoundecaprenol 4-beta-N-acetylglucosaminlytransferase activity"/>
    <property type="evidence" value="ECO:0007669"/>
    <property type="project" value="RHEA"/>
</dbReference>
<dbReference type="GO" id="GO:0050511">
    <property type="term" value="F:undecaprenyldiphospho-muramoylpentapeptide beta-N-acetylglucosaminyltransferase activity"/>
    <property type="evidence" value="ECO:0007669"/>
    <property type="project" value="UniProtKB-UniRule"/>
</dbReference>
<dbReference type="GO" id="GO:0005975">
    <property type="term" value="P:carbohydrate metabolic process"/>
    <property type="evidence" value="ECO:0007669"/>
    <property type="project" value="InterPro"/>
</dbReference>
<dbReference type="GO" id="GO:0051301">
    <property type="term" value="P:cell division"/>
    <property type="evidence" value="ECO:0007669"/>
    <property type="project" value="UniProtKB-KW"/>
</dbReference>
<dbReference type="GO" id="GO:0071555">
    <property type="term" value="P:cell wall organization"/>
    <property type="evidence" value="ECO:0007669"/>
    <property type="project" value="UniProtKB-KW"/>
</dbReference>
<dbReference type="GO" id="GO:0030259">
    <property type="term" value="P:lipid glycosylation"/>
    <property type="evidence" value="ECO:0007669"/>
    <property type="project" value="UniProtKB-UniRule"/>
</dbReference>
<dbReference type="GO" id="GO:0009252">
    <property type="term" value="P:peptidoglycan biosynthetic process"/>
    <property type="evidence" value="ECO:0007669"/>
    <property type="project" value="UniProtKB-UniRule"/>
</dbReference>
<dbReference type="GO" id="GO:0008360">
    <property type="term" value="P:regulation of cell shape"/>
    <property type="evidence" value="ECO:0007669"/>
    <property type="project" value="UniProtKB-KW"/>
</dbReference>
<dbReference type="CDD" id="cd03785">
    <property type="entry name" value="GT28_MurG"/>
    <property type="match status" value="1"/>
</dbReference>
<dbReference type="FunFam" id="3.40.50.2000:FF:000016">
    <property type="entry name" value="UDP-N-acetylglucosamine--N-acetylmuramyl-(pentapeptide) pyrophosphoryl-undecaprenol N-acetylglucosamine transferase"/>
    <property type="match status" value="1"/>
</dbReference>
<dbReference type="FunFam" id="3.40.50.2000:FF:000018">
    <property type="entry name" value="UDP-N-acetylglucosamine--N-acetylmuramyl-(pentapeptide) pyrophosphoryl-undecaprenol N-acetylglucosamine transferase"/>
    <property type="match status" value="1"/>
</dbReference>
<dbReference type="Gene3D" id="3.40.50.2000">
    <property type="entry name" value="Glycogen Phosphorylase B"/>
    <property type="match status" value="2"/>
</dbReference>
<dbReference type="HAMAP" id="MF_00033">
    <property type="entry name" value="MurG"/>
    <property type="match status" value="1"/>
</dbReference>
<dbReference type="InterPro" id="IPR006009">
    <property type="entry name" value="GlcNAc_MurG"/>
</dbReference>
<dbReference type="InterPro" id="IPR007235">
    <property type="entry name" value="Glyco_trans_28_C"/>
</dbReference>
<dbReference type="InterPro" id="IPR004276">
    <property type="entry name" value="GlycoTrans_28_N"/>
</dbReference>
<dbReference type="NCBIfam" id="TIGR01133">
    <property type="entry name" value="murG"/>
    <property type="match status" value="1"/>
</dbReference>
<dbReference type="PANTHER" id="PTHR21015:SF22">
    <property type="entry name" value="GLYCOSYLTRANSFERASE"/>
    <property type="match status" value="1"/>
</dbReference>
<dbReference type="PANTHER" id="PTHR21015">
    <property type="entry name" value="UDP-N-ACETYLGLUCOSAMINE--N-ACETYLMURAMYL-(PENTAPEPTIDE) PYROPHOSPHORYL-UNDECAPRENOL N-ACETYLGLUCOSAMINE TRANSFERASE 1"/>
    <property type="match status" value="1"/>
</dbReference>
<dbReference type="Pfam" id="PF04101">
    <property type="entry name" value="Glyco_tran_28_C"/>
    <property type="match status" value="1"/>
</dbReference>
<dbReference type="Pfam" id="PF03033">
    <property type="entry name" value="Glyco_transf_28"/>
    <property type="match status" value="1"/>
</dbReference>
<dbReference type="SUPFAM" id="SSF53756">
    <property type="entry name" value="UDP-Glycosyltransferase/glycogen phosphorylase"/>
    <property type="match status" value="1"/>
</dbReference>
<reference key="1">
    <citation type="journal article" date="2006" name="J. Bacteriol.">
        <title>Complete genome sequence of Yersinia pestis strains Antiqua and Nepal516: evidence of gene reduction in an emerging pathogen.</title>
        <authorList>
            <person name="Chain P.S.G."/>
            <person name="Hu P."/>
            <person name="Malfatti S.A."/>
            <person name="Radnedge L."/>
            <person name="Larimer F."/>
            <person name="Vergez L.M."/>
            <person name="Worsham P."/>
            <person name="Chu M.C."/>
            <person name="Andersen G.L."/>
        </authorList>
    </citation>
    <scope>NUCLEOTIDE SEQUENCE [LARGE SCALE GENOMIC DNA]</scope>
    <source>
        <strain>Antiqua</strain>
    </source>
</reference>
<organism>
    <name type="scientific">Yersinia pestis bv. Antiqua (strain Antiqua)</name>
    <dbReference type="NCBI Taxonomy" id="360102"/>
    <lineage>
        <taxon>Bacteria</taxon>
        <taxon>Pseudomonadati</taxon>
        <taxon>Pseudomonadota</taxon>
        <taxon>Gammaproteobacteria</taxon>
        <taxon>Enterobacterales</taxon>
        <taxon>Yersiniaceae</taxon>
        <taxon>Yersinia</taxon>
    </lineage>
</organism>
<comment type="function">
    <text evidence="1">Cell wall formation. Catalyzes the transfer of a GlcNAc subunit on undecaprenyl-pyrophosphoryl-MurNAc-pentapeptide (lipid intermediate I) to form undecaprenyl-pyrophosphoryl-MurNAc-(pentapeptide)GlcNAc (lipid intermediate II).</text>
</comment>
<comment type="catalytic activity">
    <reaction evidence="1">
        <text>di-trans,octa-cis-undecaprenyl diphospho-N-acetyl-alpha-D-muramoyl-L-alanyl-D-glutamyl-meso-2,6-diaminopimeloyl-D-alanyl-D-alanine + UDP-N-acetyl-alpha-D-glucosamine = di-trans,octa-cis-undecaprenyl diphospho-[N-acetyl-alpha-D-glucosaminyl-(1-&gt;4)]-N-acetyl-alpha-D-muramoyl-L-alanyl-D-glutamyl-meso-2,6-diaminopimeloyl-D-alanyl-D-alanine + UDP + H(+)</text>
        <dbReference type="Rhea" id="RHEA:31227"/>
        <dbReference type="ChEBI" id="CHEBI:15378"/>
        <dbReference type="ChEBI" id="CHEBI:57705"/>
        <dbReference type="ChEBI" id="CHEBI:58223"/>
        <dbReference type="ChEBI" id="CHEBI:61387"/>
        <dbReference type="ChEBI" id="CHEBI:61388"/>
        <dbReference type="EC" id="2.4.1.227"/>
    </reaction>
</comment>
<comment type="pathway">
    <text evidence="1">Cell wall biogenesis; peptidoglycan biosynthesis.</text>
</comment>
<comment type="subcellular location">
    <subcellularLocation>
        <location evidence="1">Cell inner membrane</location>
        <topology evidence="1">Peripheral membrane protein</topology>
        <orientation evidence="1">Cytoplasmic side</orientation>
    </subcellularLocation>
</comment>
<comment type="similarity">
    <text evidence="1">Belongs to the glycosyltransferase 28 family. MurG subfamily.</text>
</comment>
<evidence type="ECO:0000255" key="1">
    <source>
        <dbReference type="HAMAP-Rule" id="MF_00033"/>
    </source>
</evidence>
<gene>
    <name evidence="1" type="primary">murG</name>
    <name type="ordered locus">YPA_3546</name>
</gene>
<keyword id="KW-0131">Cell cycle</keyword>
<keyword id="KW-0132">Cell division</keyword>
<keyword id="KW-0997">Cell inner membrane</keyword>
<keyword id="KW-1003">Cell membrane</keyword>
<keyword id="KW-0133">Cell shape</keyword>
<keyword id="KW-0961">Cell wall biogenesis/degradation</keyword>
<keyword id="KW-0328">Glycosyltransferase</keyword>
<keyword id="KW-0472">Membrane</keyword>
<keyword id="KW-0573">Peptidoglycan synthesis</keyword>
<keyword id="KW-0808">Transferase</keyword>
<protein>
    <recommendedName>
        <fullName evidence="1">UDP-N-acetylglucosamine--N-acetylmuramyl-(pentapeptide) pyrophosphoryl-undecaprenol N-acetylglucosamine transferase</fullName>
        <ecNumber evidence="1">2.4.1.227</ecNumber>
    </recommendedName>
    <alternativeName>
        <fullName evidence="1">Undecaprenyl-PP-MurNAc-pentapeptide-UDPGlcNAc GlcNAc transferase</fullName>
    </alternativeName>
</protein>
<name>MURG_YERPA</name>
<accession>Q1C214</accession>
<proteinExistence type="inferred from homology"/>